<name>EFG_STRPS</name>
<reference key="1">
    <citation type="journal article" date="2009" name="BMC Genomics">
        <title>Genome evolution driven by host adaptations results in a more virulent and antimicrobial-resistant Streptococcus pneumoniae serotype 14.</title>
        <authorList>
            <person name="Ding F."/>
            <person name="Tang P."/>
            <person name="Hsu M.-H."/>
            <person name="Cui P."/>
            <person name="Hu S."/>
            <person name="Yu J."/>
            <person name="Chiu C.-H."/>
        </authorList>
    </citation>
    <scope>NUCLEOTIDE SEQUENCE [LARGE SCALE GENOMIC DNA]</scope>
    <source>
        <strain>CGSP14</strain>
    </source>
</reference>
<gene>
    <name evidence="1" type="primary">fusA</name>
    <name type="ordered locus">SPCG_0284</name>
</gene>
<protein>
    <recommendedName>
        <fullName evidence="1">Elongation factor G</fullName>
        <shortName evidence="1">EF-G</shortName>
    </recommendedName>
</protein>
<organism>
    <name type="scientific">Streptococcus pneumoniae (strain CGSP14)</name>
    <dbReference type="NCBI Taxonomy" id="516950"/>
    <lineage>
        <taxon>Bacteria</taxon>
        <taxon>Bacillati</taxon>
        <taxon>Bacillota</taxon>
        <taxon>Bacilli</taxon>
        <taxon>Lactobacillales</taxon>
        <taxon>Streptococcaceae</taxon>
        <taxon>Streptococcus</taxon>
    </lineage>
</organism>
<dbReference type="EMBL" id="CP001033">
    <property type="protein sequence ID" value="ACB89536.1"/>
    <property type="molecule type" value="Genomic_DNA"/>
</dbReference>
<dbReference type="RefSeq" id="WP_000090347.1">
    <property type="nucleotide sequence ID" value="NC_010582.1"/>
</dbReference>
<dbReference type="SMR" id="B2ISJ9"/>
<dbReference type="GeneID" id="45652251"/>
<dbReference type="KEGG" id="spw:SPCG_0284"/>
<dbReference type="HOGENOM" id="CLU_002794_4_1_9"/>
<dbReference type="GO" id="GO:0005737">
    <property type="term" value="C:cytoplasm"/>
    <property type="evidence" value="ECO:0007669"/>
    <property type="project" value="UniProtKB-SubCell"/>
</dbReference>
<dbReference type="GO" id="GO:0005525">
    <property type="term" value="F:GTP binding"/>
    <property type="evidence" value="ECO:0007669"/>
    <property type="project" value="UniProtKB-UniRule"/>
</dbReference>
<dbReference type="GO" id="GO:0003924">
    <property type="term" value="F:GTPase activity"/>
    <property type="evidence" value="ECO:0007669"/>
    <property type="project" value="InterPro"/>
</dbReference>
<dbReference type="GO" id="GO:0003746">
    <property type="term" value="F:translation elongation factor activity"/>
    <property type="evidence" value="ECO:0007669"/>
    <property type="project" value="UniProtKB-UniRule"/>
</dbReference>
<dbReference type="GO" id="GO:0032790">
    <property type="term" value="P:ribosome disassembly"/>
    <property type="evidence" value="ECO:0007669"/>
    <property type="project" value="TreeGrafter"/>
</dbReference>
<dbReference type="CDD" id="cd01886">
    <property type="entry name" value="EF-G"/>
    <property type="match status" value="1"/>
</dbReference>
<dbReference type="CDD" id="cd16262">
    <property type="entry name" value="EFG_III"/>
    <property type="match status" value="1"/>
</dbReference>
<dbReference type="CDD" id="cd01434">
    <property type="entry name" value="EFG_mtEFG1_IV"/>
    <property type="match status" value="1"/>
</dbReference>
<dbReference type="CDD" id="cd03713">
    <property type="entry name" value="EFG_mtEFG_C"/>
    <property type="match status" value="1"/>
</dbReference>
<dbReference type="CDD" id="cd04088">
    <property type="entry name" value="EFG_mtEFG_II"/>
    <property type="match status" value="1"/>
</dbReference>
<dbReference type="FunFam" id="2.40.30.10:FF:000006">
    <property type="entry name" value="Elongation factor G"/>
    <property type="match status" value="1"/>
</dbReference>
<dbReference type="FunFam" id="3.30.230.10:FF:000003">
    <property type="entry name" value="Elongation factor G"/>
    <property type="match status" value="1"/>
</dbReference>
<dbReference type="FunFam" id="3.30.70.240:FF:000001">
    <property type="entry name" value="Elongation factor G"/>
    <property type="match status" value="1"/>
</dbReference>
<dbReference type="FunFam" id="3.30.70.870:FF:000001">
    <property type="entry name" value="Elongation factor G"/>
    <property type="match status" value="1"/>
</dbReference>
<dbReference type="FunFam" id="3.40.50.300:FF:000029">
    <property type="entry name" value="Elongation factor G"/>
    <property type="match status" value="1"/>
</dbReference>
<dbReference type="Gene3D" id="3.30.230.10">
    <property type="match status" value="1"/>
</dbReference>
<dbReference type="Gene3D" id="3.30.70.240">
    <property type="match status" value="1"/>
</dbReference>
<dbReference type="Gene3D" id="3.30.70.870">
    <property type="entry name" value="Elongation Factor G (Translational Gtpase), domain 3"/>
    <property type="match status" value="1"/>
</dbReference>
<dbReference type="Gene3D" id="3.40.50.300">
    <property type="entry name" value="P-loop containing nucleotide triphosphate hydrolases"/>
    <property type="match status" value="1"/>
</dbReference>
<dbReference type="Gene3D" id="2.40.30.10">
    <property type="entry name" value="Translation factors"/>
    <property type="match status" value="1"/>
</dbReference>
<dbReference type="HAMAP" id="MF_00054_B">
    <property type="entry name" value="EF_G_EF_2_B"/>
    <property type="match status" value="1"/>
</dbReference>
<dbReference type="InterPro" id="IPR053905">
    <property type="entry name" value="EF-G-like_DII"/>
</dbReference>
<dbReference type="InterPro" id="IPR041095">
    <property type="entry name" value="EFG_II"/>
</dbReference>
<dbReference type="InterPro" id="IPR009022">
    <property type="entry name" value="EFG_III"/>
</dbReference>
<dbReference type="InterPro" id="IPR035647">
    <property type="entry name" value="EFG_III/V"/>
</dbReference>
<dbReference type="InterPro" id="IPR047872">
    <property type="entry name" value="EFG_IV"/>
</dbReference>
<dbReference type="InterPro" id="IPR035649">
    <property type="entry name" value="EFG_V"/>
</dbReference>
<dbReference type="InterPro" id="IPR000640">
    <property type="entry name" value="EFG_V-like"/>
</dbReference>
<dbReference type="InterPro" id="IPR031157">
    <property type="entry name" value="G_TR_CS"/>
</dbReference>
<dbReference type="InterPro" id="IPR027417">
    <property type="entry name" value="P-loop_NTPase"/>
</dbReference>
<dbReference type="InterPro" id="IPR020568">
    <property type="entry name" value="Ribosomal_Su5_D2-typ_SF"/>
</dbReference>
<dbReference type="InterPro" id="IPR014721">
    <property type="entry name" value="Ribsml_uS5_D2-typ_fold_subgr"/>
</dbReference>
<dbReference type="InterPro" id="IPR005225">
    <property type="entry name" value="Small_GTP-bd"/>
</dbReference>
<dbReference type="InterPro" id="IPR000795">
    <property type="entry name" value="T_Tr_GTP-bd_dom"/>
</dbReference>
<dbReference type="InterPro" id="IPR009000">
    <property type="entry name" value="Transl_B-barrel_sf"/>
</dbReference>
<dbReference type="InterPro" id="IPR004540">
    <property type="entry name" value="Transl_elong_EFG/EF2"/>
</dbReference>
<dbReference type="InterPro" id="IPR005517">
    <property type="entry name" value="Transl_elong_EFG/EF2_IV"/>
</dbReference>
<dbReference type="NCBIfam" id="TIGR00484">
    <property type="entry name" value="EF-G"/>
    <property type="match status" value="1"/>
</dbReference>
<dbReference type="NCBIfam" id="NF009379">
    <property type="entry name" value="PRK12740.1-3"/>
    <property type="match status" value="1"/>
</dbReference>
<dbReference type="NCBIfam" id="NF009381">
    <property type="entry name" value="PRK12740.1-5"/>
    <property type="match status" value="1"/>
</dbReference>
<dbReference type="NCBIfam" id="TIGR00231">
    <property type="entry name" value="small_GTP"/>
    <property type="match status" value="1"/>
</dbReference>
<dbReference type="PANTHER" id="PTHR43261:SF1">
    <property type="entry name" value="RIBOSOME-RELEASING FACTOR 2, MITOCHONDRIAL"/>
    <property type="match status" value="1"/>
</dbReference>
<dbReference type="PANTHER" id="PTHR43261">
    <property type="entry name" value="TRANSLATION ELONGATION FACTOR G-RELATED"/>
    <property type="match status" value="1"/>
</dbReference>
<dbReference type="Pfam" id="PF22042">
    <property type="entry name" value="EF-G_D2"/>
    <property type="match status" value="1"/>
</dbReference>
<dbReference type="Pfam" id="PF00679">
    <property type="entry name" value="EFG_C"/>
    <property type="match status" value="1"/>
</dbReference>
<dbReference type="Pfam" id="PF14492">
    <property type="entry name" value="EFG_III"/>
    <property type="match status" value="1"/>
</dbReference>
<dbReference type="Pfam" id="PF03764">
    <property type="entry name" value="EFG_IV"/>
    <property type="match status" value="1"/>
</dbReference>
<dbReference type="Pfam" id="PF00009">
    <property type="entry name" value="GTP_EFTU"/>
    <property type="match status" value="1"/>
</dbReference>
<dbReference type="PRINTS" id="PR00315">
    <property type="entry name" value="ELONGATNFCT"/>
</dbReference>
<dbReference type="SMART" id="SM00838">
    <property type="entry name" value="EFG_C"/>
    <property type="match status" value="1"/>
</dbReference>
<dbReference type="SMART" id="SM00889">
    <property type="entry name" value="EFG_IV"/>
    <property type="match status" value="1"/>
</dbReference>
<dbReference type="SUPFAM" id="SSF54980">
    <property type="entry name" value="EF-G C-terminal domain-like"/>
    <property type="match status" value="2"/>
</dbReference>
<dbReference type="SUPFAM" id="SSF52540">
    <property type="entry name" value="P-loop containing nucleoside triphosphate hydrolases"/>
    <property type="match status" value="1"/>
</dbReference>
<dbReference type="SUPFAM" id="SSF54211">
    <property type="entry name" value="Ribosomal protein S5 domain 2-like"/>
    <property type="match status" value="1"/>
</dbReference>
<dbReference type="SUPFAM" id="SSF50447">
    <property type="entry name" value="Translation proteins"/>
    <property type="match status" value="1"/>
</dbReference>
<dbReference type="PROSITE" id="PS00301">
    <property type="entry name" value="G_TR_1"/>
    <property type="match status" value="1"/>
</dbReference>
<dbReference type="PROSITE" id="PS51722">
    <property type="entry name" value="G_TR_2"/>
    <property type="match status" value="1"/>
</dbReference>
<accession>B2ISJ9</accession>
<proteinExistence type="inferred from homology"/>
<sequence length="693" mass="76835">MAREFSLEKTRNIGIMAHVDAGKTTTTERILYYTGKIHKIGETHEGASQMDWMEQEQERGITITSAATTAQWNNHRVNIIDTPGHVDFTIEVQRSLRVLDGAVTVLDSQSGVEPQTETVWRQATEYGVPRIVFANKMDKIGADFLYSVSTLHDRLQANAHPIQLPIGSEDDFRGIIDLIKMKAEIYTNDLGTDILEEDIPAEYLDQAQEYREKLIEAVAETDEELMMKYLEGEEITNEELKAGIRKATINVEFFPVLCGSAFKNKGVQLMLDAVIDYLPSPLDIPAIKGINPDTDAEETRPASDEEPFAALAFKIMTDPFVGRLTFFRVYSGVLQSGSYVLNTSKGKRERIGRILQMHANSRQEIDTVYSGDIAAAVGLKDTTTGDSLTDEKSKIILESINVPEPVIQLMVEPKSKADQDKMGIALQKLAEEDPTFRVETNVETGETVISGMGELHLDVLVDRMRREFKVEANVGAPQVSYRETFRASTQARGFFKRQSGGKGQFGDVWIEFTPNEEGKGFEFENAIVGGVVPREFIPAVEKGLVESMANGVLAGYPMVDVKAKLYDGSYHDVDSSETAFKIAASLSLKEAAKSAQPAILEPMMLVTITVPEENLGDVMGHVTARRGRVDGMEAHGNSQIVRAYVPLAEMFGYATVLRSASQGRGTFMMVFDHYEDVPKSVQEEIIKKNKGED</sequence>
<keyword id="KW-0963">Cytoplasm</keyword>
<keyword id="KW-0251">Elongation factor</keyword>
<keyword id="KW-0342">GTP-binding</keyword>
<keyword id="KW-0547">Nucleotide-binding</keyword>
<keyword id="KW-0648">Protein biosynthesis</keyword>
<feature type="chain" id="PRO_1000091769" description="Elongation factor G">
    <location>
        <begin position="1"/>
        <end position="693"/>
    </location>
</feature>
<feature type="domain" description="tr-type G">
    <location>
        <begin position="8"/>
        <end position="282"/>
    </location>
</feature>
<feature type="binding site" evidence="1">
    <location>
        <begin position="17"/>
        <end position="24"/>
    </location>
    <ligand>
        <name>GTP</name>
        <dbReference type="ChEBI" id="CHEBI:37565"/>
    </ligand>
</feature>
<feature type="binding site" evidence="1">
    <location>
        <begin position="81"/>
        <end position="85"/>
    </location>
    <ligand>
        <name>GTP</name>
        <dbReference type="ChEBI" id="CHEBI:37565"/>
    </ligand>
</feature>
<feature type="binding site" evidence="1">
    <location>
        <begin position="135"/>
        <end position="138"/>
    </location>
    <ligand>
        <name>GTP</name>
        <dbReference type="ChEBI" id="CHEBI:37565"/>
    </ligand>
</feature>
<evidence type="ECO:0000255" key="1">
    <source>
        <dbReference type="HAMAP-Rule" id="MF_00054"/>
    </source>
</evidence>
<comment type="function">
    <text evidence="1">Catalyzes the GTP-dependent ribosomal translocation step during translation elongation. During this step, the ribosome changes from the pre-translocational (PRE) to the post-translocational (POST) state as the newly formed A-site-bound peptidyl-tRNA and P-site-bound deacylated tRNA move to the P and E sites, respectively. Catalyzes the coordinated movement of the two tRNA molecules, the mRNA and conformational changes in the ribosome.</text>
</comment>
<comment type="subcellular location">
    <subcellularLocation>
        <location evidence="1">Cytoplasm</location>
    </subcellularLocation>
</comment>
<comment type="similarity">
    <text evidence="1">Belongs to the TRAFAC class translation factor GTPase superfamily. Classic translation factor GTPase family. EF-G/EF-2 subfamily.</text>
</comment>